<comment type="function">
    <text evidence="1">Specifically methylates the cytosine at position 1407 (m5C1407) of 16S rRNA.</text>
</comment>
<comment type="catalytic activity">
    <reaction evidence="1">
        <text>cytidine(1407) in 16S rRNA + S-adenosyl-L-methionine = 5-methylcytidine(1407) in 16S rRNA + S-adenosyl-L-homocysteine + H(+)</text>
        <dbReference type="Rhea" id="RHEA:42756"/>
        <dbReference type="Rhea" id="RHEA-COMP:10223"/>
        <dbReference type="Rhea" id="RHEA-COMP:10224"/>
        <dbReference type="ChEBI" id="CHEBI:15378"/>
        <dbReference type="ChEBI" id="CHEBI:57856"/>
        <dbReference type="ChEBI" id="CHEBI:59789"/>
        <dbReference type="ChEBI" id="CHEBI:74483"/>
        <dbReference type="ChEBI" id="CHEBI:82748"/>
        <dbReference type="EC" id="2.1.1.178"/>
    </reaction>
</comment>
<comment type="subcellular location">
    <subcellularLocation>
        <location evidence="1">Cytoplasm</location>
    </subcellularLocation>
</comment>
<comment type="similarity">
    <text evidence="1">Belongs to the class I-like SAM-binding methyltransferase superfamily. RsmB/NOP family.</text>
</comment>
<feature type="chain" id="PRO_1000147565" description="Ribosomal RNA small subunit methyltransferase F">
    <location>
        <begin position="1"/>
        <end position="479"/>
    </location>
</feature>
<feature type="active site" description="Nucleophile" evidence="1">
    <location>
        <position position="247"/>
    </location>
</feature>
<feature type="binding site" evidence="1">
    <location>
        <begin position="125"/>
        <end position="131"/>
    </location>
    <ligand>
        <name>S-adenosyl-L-methionine</name>
        <dbReference type="ChEBI" id="CHEBI:59789"/>
    </ligand>
</feature>
<feature type="binding site" evidence="1">
    <location>
        <position position="149"/>
    </location>
    <ligand>
        <name>S-adenosyl-L-methionine</name>
        <dbReference type="ChEBI" id="CHEBI:59789"/>
    </ligand>
</feature>
<feature type="binding site" evidence="1">
    <location>
        <position position="176"/>
    </location>
    <ligand>
        <name>S-adenosyl-L-methionine</name>
        <dbReference type="ChEBI" id="CHEBI:59789"/>
    </ligand>
</feature>
<feature type="binding site" evidence="1">
    <location>
        <position position="194"/>
    </location>
    <ligand>
        <name>S-adenosyl-L-methionine</name>
        <dbReference type="ChEBI" id="CHEBI:59789"/>
    </ligand>
</feature>
<organism>
    <name type="scientific">Escherichia coli O157:H7 (strain EC4115 / EHEC)</name>
    <dbReference type="NCBI Taxonomy" id="444450"/>
    <lineage>
        <taxon>Bacteria</taxon>
        <taxon>Pseudomonadati</taxon>
        <taxon>Pseudomonadota</taxon>
        <taxon>Gammaproteobacteria</taxon>
        <taxon>Enterobacterales</taxon>
        <taxon>Enterobacteriaceae</taxon>
        <taxon>Escherichia</taxon>
    </lineage>
</organism>
<dbReference type="EC" id="2.1.1.178" evidence="1"/>
<dbReference type="EMBL" id="CP001164">
    <property type="protein sequence ID" value="ACI38542.1"/>
    <property type="molecule type" value="Genomic_DNA"/>
</dbReference>
<dbReference type="RefSeq" id="WP_001302304.1">
    <property type="nucleotide sequence ID" value="NC_011353.1"/>
</dbReference>
<dbReference type="SMR" id="B5YQX9"/>
<dbReference type="KEGG" id="ecf:ECH74115_2568"/>
<dbReference type="HOGENOM" id="CLU_005316_6_2_6"/>
<dbReference type="GO" id="GO:0005737">
    <property type="term" value="C:cytoplasm"/>
    <property type="evidence" value="ECO:0007669"/>
    <property type="project" value="UniProtKB-SubCell"/>
</dbReference>
<dbReference type="GO" id="GO:0003723">
    <property type="term" value="F:RNA binding"/>
    <property type="evidence" value="ECO:0007669"/>
    <property type="project" value="UniProtKB-KW"/>
</dbReference>
<dbReference type="GO" id="GO:0009383">
    <property type="term" value="F:rRNA (cytosine-C5-)-methyltransferase activity"/>
    <property type="evidence" value="ECO:0007669"/>
    <property type="project" value="TreeGrafter"/>
</dbReference>
<dbReference type="GO" id="GO:0070475">
    <property type="term" value="P:rRNA base methylation"/>
    <property type="evidence" value="ECO:0007669"/>
    <property type="project" value="TreeGrafter"/>
</dbReference>
<dbReference type="FunFam" id="3.10.450.720:FF:000001">
    <property type="entry name" value="Ribosomal RNA small subunit methyltransferase F"/>
    <property type="match status" value="1"/>
</dbReference>
<dbReference type="FunFam" id="3.40.50.150:FF:000079">
    <property type="entry name" value="Ribosomal RNA small subunit methyltransferase F"/>
    <property type="match status" value="1"/>
</dbReference>
<dbReference type="Gene3D" id="3.10.450.720">
    <property type="match status" value="1"/>
</dbReference>
<dbReference type="Gene3D" id="3.40.50.150">
    <property type="entry name" value="Vaccinia Virus protein VP39"/>
    <property type="match status" value="1"/>
</dbReference>
<dbReference type="HAMAP" id="MF_01579">
    <property type="entry name" value="16SrRNA_methyltr_F"/>
    <property type="match status" value="1"/>
</dbReference>
<dbReference type="InterPro" id="IPR031341">
    <property type="entry name" value="Methyltr_RsmF_N"/>
</dbReference>
<dbReference type="InterPro" id="IPR049560">
    <property type="entry name" value="MeTrfase_RsmB-F_NOP2_cat"/>
</dbReference>
<dbReference type="InterPro" id="IPR001678">
    <property type="entry name" value="MeTrfase_RsmB-F_NOP2_dom"/>
</dbReference>
<dbReference type="InterPro" id="IPR027391">
    <property type="entry name" value="Nol1_Nop2_Fmu_2"/>
</dbReference>
<dbReference type="InterPro" id="IPR011023">
    <property type="entry name" value="Nop2p"/>
</dbReference>
<dbReference type="InterPro" id="IPR023267">
    <property type="entry name" value="RCMT"/>
</dbReference>
<dbReference type="InterPro" id="IPR023545">
    <property type="entry name" value="rRNA_ssu_MeTfrase_F"/>
</dbReference>
<dbReference type="InterPro" id="IPR018314">
    <property type="entry name" value="RsmB/NOL1/NOP2-like_CS"/>
</dbReference>
<dbReference type="InterPro" id="IPR029063">
    <property type="entry name" value="SAM-dependent_MTases_sf"/>
</dbReference>
<dbReference type="InterPro" id="IPR048457">
    <property type="entry name" value="YebU_pre-PUA_dom"/>
</dbReference>
<dbReference type="NCBIfam" id="TIGR00446">
    <property type="entry name" value="nop2p"/>
    <property type="match status" value="1"/>
</dbReference>
<dbReference type="NCBIfam" id="NF008898">
    <property type="entry name" value="PRK11933.1"/>
    <property type="match status" value="1"/>
</dbReference>
<dbReference type="PANTHER" id="PTHR22807:SF30">
    <property type="entry name" value="28S RRNA (CYTOSINE(4447)-C(5))-METHYLTRANSFERASE-RELATED"/>
    <property type="match status" value="1"/>
</dbReference>
<dbReference type="PANTHER" id="PTHR22807">
    <property type="entry name" value="NOP2 YEAST -RELATED NOL1/NOP2/FMU SUN DOMAIN-CONTAINING"/>
    <property type="match status" value="1"/>
</dbReference>
<dbReference type="Pfam" id="PF01189">
    <property type="entry name" value="Methyltr_RsmB-F"/>
    <property type="match status" value="1"/>
</dbReference>
<dbReference type="Pfam" id="PF17125">
    <property type="entry name" value="Methyltr_RsmF_N"/>
    <property type="match status" value="1"/>
</dbReference>
<dbReference type="Pfam" id="PF13636">
    <property type="entry name" value="Methyltranf_PUA"/>
    <property type="match status" value="1"/>
</dbReference>
<dbReference type="Pfam" id="PF21150">
    <property type="entry name" value="YebU_pre-PUA_dom"/>
    <property type="match status" value="1"/>
</dbReference>
<dbReference type="PRINTS" id="PR02008">
    <property type="entry name" value="RCMTFAMILY"/>
</dbReference>
<dbReference type="SUPFAM" id="SSF53335">
    <property type="entry name" value="S-adenosyl-L-methionine-dependent methyltransferases"/>
    <property type="match status" value="1"/>
</dbReference>
<dbReference type="PROSITE" id="PS01153">
    <property type="entry name" value="NOL1_NOP2_SUN"/>
    <property type="match status" value="1"/>
</dbReference>
<dbReference type="PROSITE" id="PS51686">
    <property type="entry name" value="SAM_MT_RSMB_NOP"/>
    <property type="match status" value="1"/>
</dbReference>
<protein>
    <recommendedName>
        <fullName evidence="1">Ribosomal RNA small subunit methyltransferase F</fullName>
        <ecNumber evidence="1">2.1.1.178</ecNumber>
    </recommendedName>
    <alternativeName>
        <fullName evidence="1">16S rRNA m5C1407 methyltransferase</fullName>
    </alternativeName>
    <alternativeName>
        <fullName evidence="1">rRNA (cytosine-C(5)-)-methyltransferase RsmF</fullName>
    </alternativeName>
</protein>
<reference key="1">
    <citation type="journal article" date="2011" name="Proc. Natl. Acad. Sci. U.S.A.">
        <title>Genomic anatomy of Escherichia coli O157:H7 outbreaks.</title>
        <authorList>
            <person name="Eppinger M."/>
            <person name="Mammel M.K."/>
            <person name="Leclerc J.E."/>
            <person name="Ravel J."/>
            <person name="Cebula T.A."/>
        </authorList>
    </citation>
    <scope>NUCLEOTIDE SEQUENCE [LARGE SCALE GENOMIC DNA]</scope>
    <source>
        <strain>EC4115 / EHEC</strain>
    </source>
</reference>
<gene>
    <name evidence="1" type="primary">rsmF</name>
    <name type="ordered locus">ECH74115_2568</name>
</gene>
<keyword id="KW-0963">Cytoplasm</keyword>
<keyword id="KW-0489">Methyltransferase</keyword>
<keyword id="KW-0694">RNA-binding</keyword>
<keyword id="KW-0698">rRNA processing</keyword>
<keyword id="KW-0949">S-adenosyl-L-methionine</keyword>
<keyword id="KW-0808">Transferase</keyword>
<evidence type="ECO:0000255" key="1">
    <source>
        <dbReference type="HAMAP-Rule" id="MF_01579"/>
    </source>
</evidence>
<proteinExistence type="inferred from homology"/>
<sequence length="479" mass="53262">MAQHTVYFPDAFLTQMREAMPSTLSFDDFLAACQRPLRRSIRVNTLKTSVADFLRLTAPYGWTLTPIPWCEEGFWIERDDEDALPLGSTAEHLSGLFYIQEASSMLPVAALFADGNAPQRVMDVAAAPGSKTTQIAARMNNEGAILANEFSASRVKVLHANISRCGISNVALTHFDGRVFGAALPEMFDAILLDAPCSGEGVVRKDPDALKNWSPESNQEIAATQRELIDSAFHALRSGGTLVYSTCTLNREENESVCLWLKETYPDAVEFLPLGDLFPGANKALTEEGFLHVFPQIYDCEGFFVARLRKTQAIPALPTPKYKVGNFPFSPVKDREAAQIRQAAASVGLNWDGNLRLWQRDKEVWLFPVGIEALIGKVRFSRLGIKLAETHNKGYRWQHEAVIALASPDNENAFELTPQEAEEWYRGRDVYPQAAPVADDVLVTFQHQPIGLAKRIGSRLKNSYPRELVRDGKLFTSNA</sequence>
<accession>B5YQX9</accession>
<name>RSMF_ECO5E</name>